<feature type="chain" id="PRO_1000141339" description="Photosystem II reaction center protein I">
    <location>
        <begin position="1"/>
        <end position="38"/>
    </location>
</feature>
<feature type="transmembrane region" description="Helical" evidence="1">
    <location>
        <begin position="6"/>
        <end position="26"/>
    </location>
</feature>
<gene>
    <name evidence="1" type="primary">psbI</name>
    <name type="ordered locus">MAE_51230</name>
</gene>
<organism>
    <name type="scientific">Microcystis aeruginosa (strain NIES-843 / IAM M-2473)</name>
    <dbReference type="NCBI Taxonomy" id="449447"/>
    <lineage>
        <taxon>Bacteria</taxon>
        <taxon>Bacillati</taxon>
        <taxon>Cyanobacteriota</taxon>
        <taxon>Cyanophyceae</taxon>
        <taxon>Oscillatoriophycideae</taxon>
        <taxon>Chroococcales</taxon>
        <taxon>Microcystaceae</taxon>
        <taxon>Microcystis</taxon>
    </lineage>
</organism>
<evidence type="ECO:0000255" key="1">
    <source>
        <dbReference type="HAMAP-Rule" id="MF_01316"/>
    </source>
</evidence>
<accession>B0JX58</accession>
<sequence length="38" mass="4352">MLTLKIAVYIVVSFFVLLFIFGFLSGDPTRNPGRKDFE</sequence>
<name>PSBI_MICAN</name>
<comment type="function">
    <text evidence="1">One of the components of the core complex of photosystem II (PSII), required for its stability and/or assembly. PSII is a light-driven water:plastoquinone oxidoreductase that uses light energy to abstract electrons from H(2)O, generating O(2) and a proton gradient subsequently used for ATP formation. It consists of a core antenna complex that captures photons, and an electron transfer chain that converts photonic excitation into a charge separation.</text>
</comment>
<comment type="subunit">
    <text evidence="1">PSII is composed of 1 copy each of membrane proteins PsbA, PsbB, PsbC, PsbD, PsbE, PsbF, PsbH, PsbI, PsbJ, PsbK, PsbL, PsbM, PsbT, PsbX, PsbY, PsbZ, Psb30/Ycf12, peripheral proteins PsbO, CyanoQ (PsbQ), PsbU, PsbV and a large number of cofactors. It forms dimeric complexes.</text>
</comment>
<comment type="subcellular location">
    <subcellularLocation>
        <location evidence="1">Cellular thylakoid membrane</location>
        <topology evidence="1">Single-pass membrane protein</topology>
    </subcellularLocation>
</comment>
<comment type="similarity">
    <text evidence="1">Belongs to the PsbI family.</text>
</comment>
<dbReference type="EMBL" id="AP009552">
    <property type="protein sequence ID" value="BAG04945.1"/>
    <property type="molecule type" value="Genomic_DNA"/>
</dbReference>
<dbReference type="RefSeq" id="WP_002732356.1">
    <property type="nucleotide sequence ID" value="NC_010296.1"/>
</dbReference>
<dbReference type="SMR" id="B0JX58"/>
<dbReference type="STRING" id="449447.MAE_51230"/>
<dbReference type="PaxDb" id="449447-MAE_51230"/>
<dbReference type="EnsemblBacteria" id="BAG04945">
    <property type="protein sequence ID" value="BAG04945"/>
    <property type="gene ID" value="MAE_51230"/>
</dbReference>
<dbReference type="KEGG" id="mar:MAE_51230"/>
<dbReference type="eggNOG" id="ENOG5033CII">
    <property type="taxonomic scope" value="Bacteria"/>
</dbReference>
<dbReference type="HOGENOM" id="CLU_212150_0_0_3"/>
<dbReference type="BioCyc" id="MAER449447:MAE_RS30730-MONOMER"/>
<dbReference type="Proteomes" id="UP000001510">
    <property type="component" value="Chromosome"/>
</dbReference>
<dbReference type="GO" id="GO:0009539">
    <property type="term" value="C:photosystem II reaction center"/>
    <property type="evidence" value="ECO:0007669"/>
    <property type="project" value="InterPro"/>
</dbReference>
<dbReference type="GO" id="GO:0031676">
    <property type="term" value="C:plasma membrane-derived thylakoid membrane"/>
    <property type="evidence" value="ECO:0007669"/>
    <property type="project" value="UniProtKB-SubCell"/>
</dbReference>
<dbReference type="GO" id="GO:0015979">
    <property type="term" value="P:photosynthesis"/>
    <property type="evidence" value="ECO:0007669"/>
    <property type="project" value="UniProtKB-UniRule"/>
</dbReference>
<dbReference type="HAMAP" id="MF_01316">
    <property type="entry name" value="PSII_PsbI"/>
    <property type="match status" value="1"/>
</dbReference>
<dbReference type="InterPro" id="IPR003686">
    <property type="entry name" value="PSII_PsbI"/>
</dbReference>
<dbReference type="InterPro" id="IPR037271">
    <property type="entry name" value="PSII_PsbI_sf"/>
</dbReference>
<dbReference type="NCBIfam" id="NF002735">
    <property type="entry name" value="PRK02655.1"/>
    <property type="match status" value="1"/>
</dbReference>
<dbReference type="PANTHER" id="PTHR35772">
    <property type="entry name" value="PHOTOSYSTEM II REACTION CENTER PROTEIN I"/>
    <property type="match status" value="1"/>
</dbReference>
<dbReference type="PANTHER" id="PTHR35772:SF1">
    <property type="entry name" value="PHOTOSYSTEM II REACTION CENTER PROTEIN I"/>
    <property type="match status" value="1"/>
</dbReference>
<dbReference type="Pfam" id="PF02532">
    <property type="entry name" value="PsbI"/>
    <property type="match status" value="1"/>
</dbReference>
<dbReference type="SUPFAM" id="SSF161041">
    <property type="entry name" value="Photosystem II reaction center protein I, PsbI"/>
    <property type="match status" value="1"/>
</dbReference>
<proteinExistence type="inferred from homology"/>
<keyword id="KW-0472">Membrane</keyword>
<keyword id="KW-0602">Photosynthesis</keyword>
<keyword id="KW-0604">Photosystem II</keyword>
<keyword id="KW-0674">Reaction center</keyword>
<keyword id="KW-0793">Thylakoid</keyword>
<keyword id="KW-0812">Transmembrane</keyword>
<keyword id="KW-1133">Transmembrane helix</keyword>
<protein>
    <recommendedName>
        <fullName evidence="1">Photosystem II reaction center protein I</fullName>
        <shortName evidence="1">PSII-I</shortName>
    </recommendedName>
    <alternativeName>
        <fullName evidence="1">PSII 4.4 kDa protein</fullName>
    </alternativeName>
</protein>
<reference key="1">
    <citation type="journal article" date="2007" name="DNA Res.">
        <title>Complete genomic structure of the bloom-forming toxic cyanobacterium Microcystis aeruginosa NIES-843.</title>
        <authorList>
            <person name="Kaneko T."/>
            <person name="Nakajima N."/>
            <person name="Okamoto S."/>
            <person name="Suzuki I."/>
            <person name="Tanabe Y."/>
            <person name="Tamaoki M."/>
            <person name="Nakamura Y."/>
            <person name="Kasai F."/>
            <person name="Watanabe A."/>
            <person name="Kawashima K."/>
            <person name="Kishida Y."/>
            <person name="Ono A."/>
            <person name="Shimizu Y."/>
            <person name="Takahashi C."/>
            <person name="Minami C."/>
            <person name="Fujishiro T."/>
            <person name="Kohara M."/>
            <person name="Katoh M."/>
            <person name="Nakazaki N."/>
            <person name="Nakayama S."/>
            <person name="Yamada M."/>
            <person name="Tabata S."/>
            <person name="Watanabe M.M."/>
        </authorList>
    </citation>
    <scope>NUCLEOTIDE SEQUENCE [LARGE SCALE GENOMIC DNA]</scope>
    <source>
        <strain>NIES-843 / IAM M-247</strain>
    </source>
</reference>